<organism>
    <name type="scientific">Solanum tuberosum</name>
    <name type="common">Potato</name>
    <dbReference type="NCBI Taxonomy" id="4113"/>
    <lineage>
        <taxon>Eukaryota</taxon>
        <taxon>Viridiplantae</taxon>
        <taxon>Streptophyta</taxon>
        <taxon>Embryophyta</taxon>
        <taxon>Tracheophyta</taxon>
        <taxon>Spermatophyta</taxon>
        <taxon>Magnoliopsida</taxon>
        <taxon>eudicotyledons</taxon>
        <taxon>Gunneridae</taxon>
        <taxon>Pentapetalae</taxon>
        <taxon>asterids</taxon>
        <taxon>lamiids</taxon>
        <taxon>Solanales</taxon>
        <taxon>Solanaceae</taxon>
        <taxon>Solanoideae</taxon>
        <taxon>Solaneae</taxon>
        <taxon>Solanum</taxon>
    </lineage>
</organism>
<feature type="chain" id="PRO_0000071721" description="ATP synthase 27 kDa subunit, mitochondrial">
    <location>
        <begin position="1"/>
        <end position="33" status="greater than"/>
    </location>
</feature>
<feature type="non-terminal residue">
    <location>
        <position position="33"/>
    </location>
</feature>
<proteinExistence type="evidence at protein level"/>
<dbReference type="STRING" id="4113.P80496"/>
<dbReference type="PaxDb" id="4113-PGSC0003DMT400064476"/>
<dbReference type="eggNOG" id="ENOG502QRUU">
    <property type="taxonomic scope" value="Eukaryota"/>
</dbReference>
<dbReference type="InParanoid" id="P80496"/>
<dbReference type="Proteomes" id="UP000011115">
    <property type="component" value="Unassembled WGS sequence"/>
</dbReference>
<dbReference type="GO" id="GO:0005743">
    <property type="term" value="C:mitochondrial inner membrane"/>
    <property type="evidence" value="ECO:0007669"/>
    <property type="project" value="UniProtKB-SubCell"/>
</dbReference>
<dbReference type="GO" id="GO:0045259">
    <property type="term" value="C:proton-transporting ATP synthase complex"/>
    <property type="evidence" value="ECO:0007669"/>
    <property type="project" value="UniProtKB-KW"/>
</dbReference>
<dbReference type="GO" id="GO:0009555">
    <property type="term" value="P:pollen development"/>
    <property type="evidence" value="ECO:0007669"/>
    <property type="project" value="InterPro"/>
</dbReference>
<dbReference type="GO" id="GO:1902600">
    <property type="term" value="P:proton transmembrane transport"/>
    <property type="evidence" value="ECO:0007669"/>
    <property type="project" value="UniProtKB-KW"/>
</dbReference>
<dbReference type="InterPro" id="IPR031432">
    <property type="entry name" value="MGP1"/>
</dbReference>
<dbReference type="Pfam" id="PF15704">
    <property type="entry name" value="Mt_ATP_synt"/>
    <property type="match status" value="1"/>
</dbReference>
<sequence>AKEAAAPTTLKGDQVLKDIFYEVKNKLETAIGV</sequence>
<comment type="function">
    <text>Mitochondrial membrane ATP synthase (F(1)F(0) ATP synthase or Complex V) produces ATP from ADP in the presence of a proton gradient across the membrane which is generated by electron transport complexes of the respiratory chain. F-type ATPases consist of two structural domains, F(1) - containing the extramembraneous catalytic core and F(0) - containing the membrane proton channel, linked together by a central stalk and a peripheral stalk. During catalysis, ATP synthesis in the catalytic domain of F(1) is coupled via a rotary mechanism of the central stalk subunits to proton translocation. Part of the complex F(0) domain.</text>
</comment>
<comment type="subcellular location">
    <subcellularLocation>
        <location>Mitochondrion</location>
    </subcellularLocation>
    <subcellularLocation>
        <location>Mitochondrion inner membrane</location>
    </subcellularLocation>
</comment>
<keyword id="KW-0138">CF(0)</keyword>
<keyword id="KW-0903">Direct protein sequencing</keyword>
<keyword id="KW-0375">Hydrogen ion transport</keyword>
<keyword id="KW-0406">Ion transport</keyword>
<keyword id="KW-0472">Membrane</keyword>
<keyword id="KW-0496">Mitochondrion</keyword>
<keyword id="KW-0999">Mitochondrion inner membrane</keyword>
<keyword id="KW-1185">Reference proteome</keyword>
<keyword id="KW-0813">Transport</keyword>
<protein>
    <recommendedName>
        <fullName>ATP synthase 27 kDa subunit, mitochondrial</fullName>
    </recommendedName>
</protein>
<accession>P80496</accession>
<reference key="1">
    <citation type="journal article" date="1996" name="Plant J.">
        <title>New insights into the composition, molecular mass and stoichiometry of the protein complexes of plant mitochondria.</title>
        <authorList>
            <person name="Jansch L."/>
            <person name="Kruft V."/>
            <person name="Schmitz U.K."/>
            <person name="Braun H.P."/>
        </authorList>
    </citation>
    <scope>PROTEIN SEQUENCE</scope>
    <source>
        <tissue>Tuber</tissue>
    </source>
</reference>
<name>ATP7_SOLTU</name>